<accession>Q9ZCJ2</accession>
<name>Y748_RICPR</name>
<proteinExistence type="predicted"/>
<sequence length="371" mass="42244">MANIKHKLLIFLSFFCLLYLTSCQIHNEGEITIHKKEQKEIEIAILMPNQGPDAVVGKQYKDLIKMGLNDAVKSYIHVTSYDGSDEQNVLAAMDKIVARKTKIILGPLYSNFTSLITEKAKANDIIIITMSNNPALAEDKLFVFGHAPLKQLIRIINYYGDHHKDFMALLPQGKYSQTISQVMQNILIQKNSSLSHTEFYEDNPEAIEKAVRNISNNADIINERSDTTKPVIYLSDDPKNLNLLADSIRKYNLDKKAILIGDNRIDVDYSENIDISFTSTLNLFNSNVQDRAKDLGINHMGFMHLIAYDLGRMTANYIGNEFVSEIFLNRMHSRQPYIGLSGNIHFIDGVAQRRYDIIRKENGVYFTITED</sequence>
<feature type="chain" id="PRO_0000101414" description="Uncharacterized protein RP748">
    <location>
        <begin position="1"/>
        <end position="371"/>
    </location>
</feature>
<protein>
    <recommendedName>
        <fullName>Uncharacterized protein RP748</fullName>
    </recommendedName>
</protein>
<keyword id="KW-1185">Reference proteome</keyword>
<reference key="1">
    <citation type="journal article" date="1998" name="Nature">
        <title>The genome sequence of Rickettsia prowazekii and the origin of mitochondria.</title>
        <authorList>
            <person name="Andersson S.G.E."/>
            <person name="Zomorodipour A."/>
            <person name="Andersson J.O."/>
            <person name="Sicheritz-Ponten T."/>
            <person name="Alsmark U.C.M."/>
            <person name="Podowski R.M."/>
            <person name="Naeslund A.K."/>
            <person name="Eriksson A.-S."/>
            <person name="Winkler H.H."/>
            <person name="Kurland C.G."/>
        </authorList>
    </citation>
    <scope>NUCLEOTIDE SEQUENCE [LARGE SCALE GENOMIC DNA]</scope>
    <source>
        <strain>Madrid E</strain>
    </source>
</reference>
<dbReference type="EMBL" id="AJ235273">
    <property type="protein sequence ID" value="CAA15176.1"/>
    <property type="molecule type" value="Genomic_DNA"/>
</dbReference>
<dbReference type="PIR" id="H71634">
    <property type="entry name" value="H71634"/>
</dbReference>
<dbReference type="RefSeq" id="NP_221100.1">
    <property type="nucleotide sequence ID" value="NC_000963.1"/>
</dbReference>
<dbReference type="RefSeq" id="WP_004597006.1">
    <property type="nucleotide sequence ID" value="NC_000963.1"/>
</dbReference>
<dbReference type="SMR" id="Q9ZCJ2"/>
<dbReference type="STRING" id="272947.gene:17555818"/>
<dbReference type="EnsemblBacteria" id="CAA15176">
    <property type="protein sequence ID" value="CAA15176"/>
    <property type="gene ID" value="CAA15176"/>
</dbReference>
<dbReference type="KEGG" id="rpr:RP748"/>
<dbReference type="PATRIC" id="fig|272947.5.peg.782"/>
<dbReference type="eggNOG" id="COG0683">
    <property type="taxonomic scope" value="Bacteria"/>
</dbReference>
<dbReference type="HOGENOM" id="CLU_745731_0_0_5"/>
<dbReference type="OrthoDB" id="7160237at2"/>
<dbReference type="Proteomes" id="UP000002480">
    <property type="component" value="Chromosome"/>
</dbReference>
<dbReference type="CDD" id="cd06339">
    <property type="entry name" value="PBP1_YraM_LppC_lipoprotein-like"/>
    <property type="match status" value="1"/>
</dbReference>
<dbReference type="Gene3D" id="3.40.50.2300">
    <property type="match status" value="1"/>
</dbReference>
<dbReference type="InterPro" id="IPR028082">
    <property type="entry name" value="Peripla_BP_I"/>
</dbReference>
<dbReference type="SUPFAM" id="SSF53822">
    <property type="entry name" value="Periplasmic binding protein-like I"/>
    <property type="match status" value="1"/>
</dbReference>
<organism>
    <name type="scientific">Rickettsia prowazekii (strain Madrid E)</name>
    <dbReference type="NCBI Taxonomy" id="272947"/>
    <lineage>
        <taxon>Bacteria</taxon>
        <taxon>Pseudomonadati</taxon>
        <taxon>Pseudomonadota</taxon>
        <taxon>Alphaproteobacteria</taxon>
        <taxon>Rickettsiales</taxon>
        <taxon>Rickettsiaceae</taxon>
        <taxon>Rickettsieae</taxon>
        <taxon>Rickettsia</taxon>
        <taxon>typhus group</taxon>
    </lineage>
</organism>
<gene>
    <name type="ordered locus">RP748</name>
</gene>